<name>OPGC_SALPA</name>
<feature type="chain" id="PRO_0000218053" description="Glucans biosynthesis protein C">
    <location>
        <begin position="1"/>
        <end position="384"/>
    </location>
</feature>
<feature type="transmembrane region" description="Helical" evidence="1">
    <location>
        <begin position="17"/>
        <end position="37"/>
    </location>
</feature>
<feature type="transmembrane region" description="Helical" evidence="1">
    <location>
        <begin position="54"/>
        <end position="74"/>
    </location>
</feature>
<feature type="transmembrane region" description="Helical" evidence="1">
    <location>
        <begin position="91"/>
        <end position="111"/>
    </location>
</feature>
<feature type="transmembrane region" description="Helical" evidence="1">
    <location>
        <begin position="140"/>
        <end position="160"/>
    </location>
</feature>
<feature type="transmembrane region" description="Helical" evidence="1">
    <location>
        <begin position="173"/>
        <end position="193"/>
    </location>
</feature>
<feature type="transmembrane region" description="Helical" evidence="1">
    <location>
        <begin position="212"/>
        <end position="232"/>
    </location>
</feature>
<feature type="transmembrane region" description="Helical" evidence="1">
    <location>
        <begin position="240"/>
        <end position="260"/>
    </location>
</feature>
<feature type="transmembrane region" description="Helical" evidence="1">
    <location>
        <begin position="274"/>
        <end position="294"/>
    </location>
</feature>
<feature type="transmembrane region" description="Helical" evidence="1">
    <location>
        <begin position="311"/>
        <end position="331"/>
    </location>
</feature>
<feature type="transmembrane region" description="Helical" evidence="1">
    <location>
        <begin position="338"/>
        <end position="358"/>
    </location>
</feature>
<sequence length="384" mass="44322">MSSVPAPREYFLDSIRAWLMLLGIPFHISLIYSTHSWHVNSATPSWWLTLFNDFIHAFRMQVFFVISGYFSYMLFLRYPLKRWWKVRVERVGIPMLTAIPLLTLPQFILLQYVKEKTENWPTLSAYEKYNTLAWELISHLWFLLVLVILTTVSIGIFTWFQKRQETSKPRPAAISLARLSLIFFLLGMAYAAIRRIIFIVYPAILSDGMFNFIVMQTLFYVPFFILGALAFIHPDLKARFTTPSRGCTLGAAVAFIAYLLNQRYGSGDAWMYETESVITMVMGLWMVNVVFSLGHRLLNFQSARVTYFVNASLFIYLVHHPLTLFFGAYITPHISSNLIGFLCGLIFVMGIALILYEIHLRIPLLKFLFSGKPPVKQESRAAIG</sequence>
<accession>Q5PGX5</accession>
<organism>
    <name type="scientific">Salmonella paratyphi A (strain ATCC 9150 / SARB42)</name>
    <dbReference type="NCBI Taxonomy" id="295319"/>
    <lineage>
        <taxon>Bacteria</taxon>
        <taxon>Pseudomonadati</taxon>
        <taxon>Pseudomonadota</taxon>
        <taxon>Gammaproteobacteria</taxon>
        <taxon>Enterobacterales</taxon>
        <taxon>Enterobacteriaceae</taxon>
        <taxon>Salmonella</taxon>
    </lineage>
</organism>
<keyword id="KW-0012">Acyltransferase</keyword>
<keyword id="KW-1003">Cell membrane</keyword>
<keyword id="KW-0472">Membrane</keyword>
<keyword id="KW-0808">Transferase</keyword>
<keyword id="KW-0812">Transmembrane</keyword>
<keyword id="KW-1133">Transmembrane helix</keyword>
<protein>
    <recommendedName>
        <fullName evidence="1">Glucans biosynthesis protein C</fullName>
        <ecNumber evidence="1">2.1.-.-</ecNumber>
    </recommendedName>
</protein>
<reference key="1">
    <citation type="journal article" date="2004" name="Nat. Genet.">
        <title>Comparison of genome degradation in Paratyphi A and Typhi, human-restricted serovars of Salmonella enterica that cause typhoid.</title>
        <authorList>
            <person name="McClelland M."/>
            <person name="Sanderson K.E."/>
            <person name="Clifton S.W."/>
            <person name="Latreille P."/>
            <person name="Porwollik S."/>
            <person name="Sabo A."/>
            <person name="Meyer R."/>
            <person name="Bieri T."/>
            <person name="Ozersky P."/>
            <person name="McLellan M."/>
            <person name="Harkins C.R."/>
            <person name="Wang C."/>
            <person name="Nguyen C."/>
            <person name="Berghoff A."/>
            <person name="Elliott G."/>
            <person name="Kohlberg S."/>
            <person name="Strong C."/>
            <person name="Du F."/>
            <person name="Carter J."/>
            <person name="Kremizki C."/>
            <person name="Layman D."/>
            <person name="Leonard S."/>
            <person name="Sun H."/>
            <person name="Fulton L."/>
            <person name="Nash W."/>
            <person name="Miner T."/>
            <person name="Minx P."/>
            <person name="Delehaunty K."/>
            <person name="Fronick C."/>
            <person name="Magrini V."/>
            <person name="Nhan M."/>
            <person name="Warren W."/>
            <person name="Florea L."/>
            <person name="Spieth J."/>
            <person name="Wilson R.K."/>
        </authorList>
    </citation>
    <scope>NUCLEOTIDE SEQUENCE [LARGE SCALE GENOMIC DNA]</scope>
    <source>
        <strain>ATCC 9150 / SARB42</strain>
    </source>
</reference>
<gene>
    <name evidence="1" type="primary">mdoC</name>
    <name evidence="1" type="synonym">opgC</name>
    <name type="ordered locus">SPA1702</name>
</gene>
<proteinExistence type="inferred from homology"/>
<dbReference type="EC" id="2.1.-.-" evidence="1"/>
<dbReference type="EMBL" id="CP000026">
    <property type="protein sequence ID" value="AAV77626.1"/>
    <property type="molecule type" value="Genomic_DNA"/>
</dbReference>
<dbReference type="RefSeq" id="WP_000100069.1">
    <property type="nucleotide sequence ID" value="NC_006511.1"/>
</dbReference>
<dbReference type="KEGG" id="spt:SPA1702"/>
<dbReference type="HOGENOM" id="CLU_036182_2_0_6"/>
<dbReference type="UniPathway" id="UPA00637"/>
<dbReference type="Proteomes" id="UP000008185">
    <property type="component" value="Chromosome"/>
</dbReference>
<dbReference type="GO" id="GO:0005886">
    <property type="term" value="C:plasma membrane"/>
    <property type="evidence" value="ECO:0007669"/>
    <property type="project" value="UniProtKB-SubCell"/>
</dbReference>
<dbReference type="GO" id="GO:0016747">
    <property type="term" value="F:acyltransferase activity, transferring groups other than amino-acyl groups"/>
    <property type="evidence" value="ECO:0007669"/>
    <property type="project" value="InterPro"/>
</dbReference>
<dbReference type="GO" id="GO:0016741">
    <property type="term" value="F:transferase activity, transferring one-carbon groups"/>
    <property type="evidence" value="ECO:0007669"/>
    <property type="project" value="UniProtKB-UniRule"/>
</dbReference>
<dbReference type="GO" id="GO:0009250">
    <property type="term" value="P:glucan biosynthetic process"/>
    <property type="evidence" value="ECO:0007669"/>
    <property type="project" value="UniProtKB-UniRule"/>
</dbReference>
<dbReference type="HAMAP" id="MF_01066">
    <property type="entry name" value="MdoC_OpgC"/>
    <property type="match status" value="1"/>
</dbReference>
<dbReference type="InterPro" id="IPR002656">
    <property type="entry name" value="Acyl_transf_3_dom"/>
</dbReference>
<dbReference type="InterPro" id="IPR050623">
    <property type="entry name" value="Glucan_succinyl_AcylTrfase"/>
</dbReference>
<dbReference type="InterPro" id="IPR023723">
    <property type="entry name" value="Glucans_biosynth_C"/>
</dbReference>
<dbReference type="NCBIfam" id="NF003014">
    <property type="entry name" value="PRK03854.1"/>
    <property type="match status" value="1"/>
</dbReference>
<dbReference type="PANTHER" id="PTHR36927">
    <property type="entry name" value="BLR4337 PROTEIN"/>
    <property type="match status" value="1"/>
</dbReference>
<dbReference type="PANTHER" id="PTHR36927:SF3">
    <property type="entry name" value="GLUCANS BIOSYNTHESIS PROTEIN C"/>
    <property type="match status" value="1"/>
</dbReference>
<dbReference type="Pfam" id="PF01757">
    <property type="entry name" value="Acyl_transf_3"/>
    <property type="match status" value="1"/>
</dbReference>
<comment type="function">
    <text evidence="1">Necessary for the succinyl substitution of periplasmic glucans. Could catalyze the transfer of succinyl residues from the cytoplasmic side of the membrane to the nascent glucan backbones on the periplasmic side of the membrane.</text>
</comment>
<comment type="pathway">
    <text evidence="1">Glycan metabolism; osmoregulated periplasmic glucan (OPG) biosynthesis.</text>
</comment>
<comment type="subcellular location">
    <subcellularLocation>
        <location evidence="1">Cell membrane</location>
        <topology evidence="1">Multi-pass membrane protein</topology>
    </subcellularLocation>
</comment>
<comment type="similarity">
    <text evidence="1">Belongs to the acyltransferase 3 family. OpgC subfamily.</text>
</comment>
<evidence type="ECO:0000255" key="1">
    <source>
        <dbReference type="HAMAP-Rule" id="MF_01066"/>
    </source>
</evidence>